<sequence length="126" mass="14386">MQTTTQVKTPVVGKHVYGELYGVDEELLRDQEKLRKIVIEAAHIAKMHLVEVNSWKFKGGDKEGVSVIALVLESHIAIHTWPTYNYATVDVYTCGEHSDPMAAFRYIVSQLAPKRFTVNYSDRSYR</sequence>
<comment type="function">
    <text evidence="1">Specifically catalyzes the decarboxylation of L-arginine to agmatine. Has no S-adenosylmethionine decarboxylase (AdoMetDC) activity.</text>
</comment>
<comment type="catalytic activity">
    <reaction evidence="1">
        <text>L-arginine + H(+) = agmatine + CO2</text>
        <dbReference type="Rhea" id="RHEA:17641"/>
        <dbReference type="ChEBI" id="CHEBI:15378"/>
        <dbReference type="ChEBI" id="CHEBI:16526"/>
        <dbReference type="ChEBI" id="CHEBI:32682"/>
        <dbReference type="ChEBI" id="CHEBI:58145"/>
        <dbReference type="EC" id="4.1.1.19"/>
    </reaction>
</comment>
<comment type="cofactor">
    <cofactor evidence="1">
        <name>pyruvate</name>
        <dbReference type="ChEBI" id="CHEBI:15361"/>
    </cofactor>
    <text evidence="1">Binds 1 pyruvoyl group covalently per subunit.</text>
</comment>
<comment type="pathway">
    <text evidence="1">Amine and polyamine biosynthesis; agmatine biosynthesis; agmatine from L-arginine: step 1/1.</text>
</comment>
<comment type="subunit">
    <text evidence="1">Heterooctamer of four alpha and four beta chains arranged as a tetramer of alpha/beta heterodimers.</text>
</comment>
<comment type="PTM">
    <text evidence="1">Is synthesized initially as an inactive proenzyme. Formation of the active enzyme involves a self-maturation process in which the active site pyruvoyl group is generated from an internal serine residue via an autocatalytic post-translational modification. Two non-identical subunits are generated from the proenzyme in this reaction, and the pyruvate is formed at the N-terminus of the alpha chain, which is derived from the carboxyl end of the proenzyme. The post-translation cleavage follows an unusual pathway, termed non-hydrolytic serinolysis, in which the side chain hydroxyl group of the serine supplies its oxygen atom to form the C-terminus of the beta chain, while the remainder of the serine residue undergoes an oxidative deamination to produce ammonia and the pyruvoyl group blocking the N-terminus of the alpha chain.</text>
</comment>
<comment type="similarity">
    <text evidence="1">Belongs to the prokaryotic AdoMetDC family. Type 1 subfamily.</text>
</comment>
<comment type="sequence caution" evidence="2">
    <conflict type="erroneous initiation">
        <sequence resource="EMBL-CDS" id="ACB39673"/>
    </conflict>
</comment>
<evidence type="ECO:0000255" key="1">
    <source>
        <dbReference type="HAMAP-Rule" id="MF_01298"/>
    </source>
</evidence>
<evidence type="ECO:0000305" key="2"/>
<protein>
    <recommendedName>
        <fullName evidence="1">Arginine decarboxylase proenzyme</fullName>
        <shortName evidence="1">ADC</shortName>
        <shortName evidence="1">ArgDC</shortName>
        <ecNumber evidence="1">4.1.1.19</ecNumber>
    </recommendedName>
    <alternativeName>
        <fullName evidence="1">Pyruvoyl-dependent arginine decarboxylase</fullName>
    </alternativeName>
    <component>
        <recommendedName>
            <fullName evidence="1">Arginine decarboxylase beta chain</fullName>
        </recommendedName>
    </component>
    <component>
        <recommendedName>
            <fullName evidence="1">Arginine decarboxylase alpha chain</fullName>
        </recommendedName>
    </component>
</protein>
<dbReference type="EC" id="4.1.1.19" evidence="1"/>
<dbReference type="EMBL" id="CP001014">
    <property type="protein sequence ID" value="ACB39673.1"/>
    <property type="status" value="ALT_INIT"/>
    <property type="molecule type" value="Genomic_DNA"/>
</dbReference>
<dbReference type="RefSeq" id="WP_148682483.1">
    <property type="nucleotide sequence ID" value="NC_010525.1"/>
</dbReference>
<dbReference type="SMR" id="B1YD10"/>
<dbReference type="STRING" id="444157.Tneu_0734"/>
<dbReference type="GeneID" id="6165201"/>
<dbReference type="KEGG" id="tne:Tneu_0734"/>
<dbReference type="eggNOG" id="arCOG00279">
    <property type="taxonomic scope" value="Archaea"/>
</dbReference>
<dbReference type="HOGENOM" id="CLU_125470_2_1_2"/>
<dbReference type="OrthoDB" id="114016at2157"/>
<dbReference type="UniPathway" id="UPA00186">
    <property type="reaction ID" value="UER00284"/>
</dbReference>
<dbReference type="Proteomes" id="UP000001694">
    <property type="component" value="Chromosome"/>
</dbReference>
<dbReference type="GO" id="GO:0005829">
    <property type="term" value="C:cytosol"/>
    <property type="evidence" value="ECO:0007669"/>
    <property type="project" value="TreeGrafter"/>
</dbReference>
<dbReference type="GO" id="GO:0008792">
    <property type="term" value="F:arginine decarboxylase activity"/>
    <property type="evidence" value="ECO:0007669"/>
    <property type="project" value="UniProtKB-UniRule"/>
</dbReference>
<dbReference type="GO" id="GO:0006527">
    <property type="term" value="P:arginine catabolic process"/>
    <property type="evidence" value="ECO:0007669"/>
    <property type="project" value="UniProtKB-UniRule"/>
</dbReference>
<dbReference type="GO" id="GO:0006596">
    <property type="term" value="P:polyamine biosynthetic process"/>
    <property type="evidence" value="ECO:0007669"/>
    <property type="project" value="UniProtKB-UniRule"/>
</dbReference>
<dbReference type="FunFam" id="3.60.90.10:FF:000005">
    <property type="entry name" value="Arginine decarboxylase proenzyme"/>
    <property type="match status" value="1"/>
</dbReference>
<dbReference type="Gene3D" id="3.60.90.10">
    <property type="entry name" value="S-adenosylmethionine decarboxylase"/>
    <property type="match status" value="1"/>
</dbReference>
<dbReference type="HAMAP" id="MF_00464">
    <property type="entry name" value="AdoMetDC_1"/>
    <property type="match status" value="1"/>
</dbReference>
<dbReference type="HAMAP" id="MF_01298">
    <property type="entry name" value="ArgDC"/>
    <property type="match status" value="1"/>
</dbReference>
<dbReference type="InterPro" id="IPR003826">
    <property type="entry name" value="AdoMetDC_fam_prok"/>
</dbReference>
<dbReference type="InterPro" id="IPR027549">
    <property type="entry name" value="ArgDC"/>
</dbReference>
<dbReference type="InterPro" id="IPR016067">
    <property type="entry name" value="S-AdoMet_deCO2ase_core"/>
</dbReference>
<dbReference type="InterPro" id="IPR017716">
    <property type="entry name" value="S-AdoMet_deCOase_pro-enz"/>
</dbReference>
<dbReference type="NCBIfam" id="TIGR03330">
    <property type="entry name" value="SAM_DCase_Bsu"/>
    <property type="match status" value="1"/>
</dbReference>
<dbReference type="PANTHER" id="PTHR33866">
    <property type="entry name" value="S-ADENOSYLMETHIONINE DECARBOXYLASE PROENZYME"/>
    <property type="match status" value="1"/>
</dbReference>
<dbReference type="PANTHER" id="PTHR33866:SF2">
    <property type="entry name" value="S-ADENOSYLMETHIONINE DECARBOXYLASE PROENZYME"/>
    <property type="match status" value="1"/>
</dbReference>
<dbReference type="Pfam" id="PF02675">
    <property type="entry name" value="AdoMet_dc"/>
    <property type="match status" value="1"/>
</dbReference>
<dbReference type="SUPFAM" id="SSF56276">
    <property type="entry name" value="S-adenosylmethionine decarboxylase"/>
    <property type="match status" value="1"/>
</dbReference>
<proteinExistence type="inferred from homology"/>
<accession>B1YD10</accession>
<keyword id="KW-0068">Autocatalytic cleavage</keyword>
<keyword id="KW-0210">Decarboxylase</keyword>
<keyword id="KW-0456">Lyase</keyword>
<keyword id="KW-0620">Polyamine biosynthesis</keyword>
<keyword id="KW-0670">Pyruvate</keyword>
<keyword id="KW-0704">Schiff base</keyword>
<keyword id="KW-0865">Zymogen</keyword>
<organism>
    <name type="scientific">Pyrobaculum neutrophilum (strain DSM 2338 / JCM 9278 / NBRC 100436 / V24Sta)</name>
    <name type="common">Thermoproteus neutrophilus</name>
    <dbReference type="NCBI Taxonomy" id="444157"/>
    <lineage>
        <taxon>Archaea</taxon>
        <taxon>Thermoproteota</taxon>
        <taxon>Thermoprotei</taxon>
        <taxon>Thermoproteales</taxon>
        <taxon>Thermoproteaceae</taxon>
        <taxon>Pyrobaculum</taxon>
    </lineage>
</organism>
<name>ARGDC_PYRNV</name>
<gene>
    <name type="ordered locus">Tneu_0734</name>
</gene>
<feature type="chain" id="PRO_0000364127" description="Arginine decarboxylase beta chain" evidence="1">
    <location>
        <begin position="1"/>
        <end position="73"/>
    </location>
</feature>
<feature type="chain" id="PRO_0000364128" description="Arginine decarboxylase alpha chain" evidence="1">
    <location>
        <begin position="74"/>
        <end position="126"/>
    </location>
</feature>
<feature type="active site" description="Schiff-base intermediate with substrate; via pyruvic acid" evidence="1">
    <location>
        <position position="74"/>
    </location>
</feature>
<feature type="active site" description="Proton acceptor; for processing activity" evidence="1">
    <location>
        <position position="79"/>
    </location>
</feature>
<feature type="active site" description="Proton donor; for catalytic activity" evidence="1">
    <location>
        <position position="94"/>
    </location>
</feature>
<feature type="site" description="Cleavage (non-hydrolytic); by autolysis" evidence="1">
    <location>
        <begin position="73"/>
        <end position="74"/>
    </location>
</feature>
<feature type="modified residue" description="Pyruvic acid (Ser); by autocatalysis" evidence="1">
    <location>
        <position position="74"/>
    </location>
</feature>
<reference key="1">
    <citation type="submission" date="2008-03" db="EMBL/GenBank/DDBJ databases">
        <title>Complete sequence of Thermoproteus neutrophilus V24Sta.</title>
        <authorList>
            <consortium name="US DOE Joint Genome Institute"/>
            <person name="Copeland A."/>
            <person name="Lucas S."/>
            <person name="Lapidus A."/>
            <person name="Glavina del Rio T."/>
            <person name="Dalin E."/>
            <person name="Tice H."/>
            <person name="Bruce D."/>
            <person name="Goodwin L."/>
            <person name="Pitluck S."/>
            <person name="Sims D."/>
            <person name="Brettin T."/>
            <person name="Detter J.C."/>
            <person name="Han C."/>
            <person name="Kuske C.R."/>
            <person name="Schmutz J."/>
            <person name="Larimer F."/>
            <person name="Land M."/>
            <person name="Hauser L."/>
            <person name="Kyrpides N."/>
            <person name="Mikhailova N."/>
            <person name="Biddle J.F."/>
            <person name="Zhang Z."/>
            <person name="Fitz-Gibbon S.T."/>
            <person name="Lowe T.M."/>
            <person name="Saltikov C."/>
            <person name="House C.H."/>
            <person name="Richardson P."/>
        </authorList>
    </citation>
    <scope>NUCLEOTIDE SEQUENCE [LARGE SCALE GENOMIC DNA]</scope>
    <source>
        <strain>DSM 2338 / JCM 9278 / NBRC 100436 / V24Sta</strain>
    </source>
</reference>